<keyword id="KW-0028">Amino-acid biosynthesis</keyword>
<keyword id="KW-0057">Aromatic amino acid biosynthesis</keyword>
<keyword id="KW-0413">Isomerase</keyword>
<keyword id="KW-1185">Reference proteome</keyword>
<keyword id="KW-0822">Tryptophan biosynthesis</keyword>
<comment type="catalytic activity">
    <reaction evidence="1">
        <text>N-(5-phospho-beta-D-ribosyl)anthranilate = 1-(2-carboxyphenylamino)-1-deoxy-D-ribulose 5-phosphate</text>
        <dbReference type="Rhea" id="RHEA:21540"/>
        <dbReference type="ChEBI" id="CHEBI:18277"/>
        <dbReference type="ChEBI" id="CHEBI:58613"/>
        <dbReference type="EC" id="5.3.1.24"/>
    </reaction>
</comment>
<comment type="pathway">
    <text evidence="1">Amino-acid biosynthesis; L-tryptophan biosynthesis; L-tryptophan from chorismate: step 3/5.</text>
</comment>
<comment type="similarity">
    <text evidence="1">Belongs to the TrpF family.</text>
</comment>
<proteinExistence type="inferred from homology"/>
<sequence>MKICGITDVETAKSACEYGADALGFVFAESKREITPKRAEEIIQELPANVLKIGVFVNESVEVIQKIADECGLTHVQLHGDEDNYQIRRLNIPSIKSLGVTSESDMKNAQGYEADYILFDSPKEKFHGGNGKTFSWELLRDMPKELRKKMILAGGLNALNIEEAIRTVRPYMVDVSSGVETEGKKDVEKIKQFIIKAKECSK</sequence>
<dbReference type="EC" id="5.3.1.24" evidence="1"/>
<dbReference type="EMBL" id="AE016877">
    <property type="protein sequence ID" value="AAP08221.1"/>
    <property type="molecule type" value="Genomic_DNA"/>
</dbReference>
<dbReference type="RefSeq" id="NP_831020.1">
    <property type="nucleotide sequence ID" value="NC_004722.1"/>
</dbReference>
<dbReference type="SMR" id="Q81GG6"/>
<dbReference type="STRING" id="226900.BC_1236"/>
<dbReference type="KEGG" id="bce:BC1236"/>
<dbReference type="PATRIC" id="fig|226900.8.peg.1207"/>
<dbReference type="HOGENOM" id="CLU_076364_1_0_9"/>
<dbReference type="UniPathway" id="UPA00035">
    <property type="reaction ID" value="UER00042"/>
</dbReference>
<dbReference type="Proteomes" id="UP000001417">
    <property type="component" value="Chromosome"/>
</dbReference>
<dbReference type="GO" id="GO:0004640">
    <property type="term" value="F:phosphoribosylanthranilate isomerase activity"/>
    <property type="evidence" value="ECO:0000318"/>
    <property type="project" value="GO_Central"/>
</dbReference>
<dbReference type="GO" id="GO:0000162">
    <property type="term" value="P:L-tryptophan biosynthetic process"/>
    <property type="evidence" value="ECO:0000318"/>
    <property type="project" value="GO_Central"/>
</dbReference>
<dbReference type="CDD" id="cd00405">
    <property type="entry name" value="PRAI"/>
    <property type="match status" value="1"/>
</dbReference>
<dbReference type="FunFam" id="3.20.20.70:FF:000075">
    <property type="entry name" value="Tryptophan biosynthesis protein TRP1"/>
    <property type="match status" value="1"/>
</dbReference>
<dbReference type="Gene3D" id="3.20.20.70">
    <property type="entry name" value="Aldolase class I"/>
    <property type="match status" value="1"/>
</dbReference>
<dbReference type="HAMAP" id="MF_00135">
    <property type="entry name" value="PRAI"/>
    <property type="match status" value="1"/>
</dbReference>
<dbReference type="InterPro" id="IPR013785">
    <property type="entry name" value="Aldolase_TIM"/>
</dbReference>
<dbReference type="InterPro" id="IPR001240">
    <property type="entry name" value="PRAI_dom"/>
</dbReference>
<dbReference type="InterPro" id="IPR011060">
    <property type="entry name" value="RibuloseP-bd_barrel"/>
</dbReference>
<dbReference type="InterPro" id="IPR044643">
    <property type="entry name" value="TrpF_fam"/>
</dbReference>
<dbReference type="NCBIfam" id="NF002297">
    <property type="entry name" value="PRK01222.1-3"/>
    <property type="match status" value="1"/>
</dbReference>
<dbReference type="PANTHER" id="PTHR42894">
    <property type="entry name" value="N-(5'-PHOSPHORIBOSYL)ANTHRANILATE ISOMERASE"/>
    <property type="match status" value="1"/>
</dbReference>
<dbReference type="PANTHER" id="PTHR42894:SF1">
    <property type="entry name" value="N-(5'-PHOSPHORIBOSYL)ANTHRANILATE ISOMERASE"/>
    <property type="match status" value="1"/>
</dbReference>
<dbReference type="Pfam" id="PF00697">
    <property type="entry name" value="PRAI"/>
    <property type="match status" value="1"/>
</dbReference>
<dbReference type="SUPFAM" id="SSF51366">
    <property type="entry name" value="Ribulose-phoshate binding barrel"/>
    <property type="match status" value="1"/>
</dbReference>
<feature type="chain" id="PRO_0000154344" description="N-(5'-phosphoribosyl)anthranilate isomerase">
    <location>
        <begin position="1"/>
        <end position="202"/>
    </location>
</feature>
<evidence type="ECO:0000255" key="1">
    <source>
        <dbReference type="HAMAP-Rule" id="MF_00135"/>
    </source>
</evidence>
<reference key="1">
    <citation type="journal article" date="2003" name="Nature">
        <title>Genome sequence of Bacillus cereus and comparative analysis with Bacillus anthracis.</title>
        <authorList>
            <person name="Ivanova N."/>
            <person name="Sorokin A."/>
            <person name="Anderson I."/>
            <person name="Galleron N."/>
            <person name="Candelon B."/>
            <person name="Kapatral V."/>
            <person name="Bhattacharyya A."/>
            <person name="Reznik G."/>
            <person name="Mikhailova N."/>
            <person name="Lapidus A."/>
            <person name="Chu L."/>
            <person name="Mazur M."/>
            <person name="Goltsman E."/>
            <person name="Larsen N."/>
            <person name="D'Souza M."/>
            <person name="Walunas T."/>
            <person name="Grechkin Y."/>
            <person name="Pusch G."/>
            <person name="Haselkorn R."/>
            <person name="Fonstein M."/>
            <person name="Ehrlich S.D."/>
            <person name="Overbeek R."/>
            <person name="Kyrpides N.C."/>
        </authorList>
    </citation>
    <scope>NUCLEOTIDE SEQUENCE [LARGE SCALE GENOMIC DNA]</scope>
    <source>
        <strain>ATCC 14579 / DSM 31 / CCUG 7414 / JCM 2152 / NBRC 15305 / NCIMB 9373 / NCTC 2599 / NRRL B-3711</strain>
    </source>
</reference>
<protein>
    <recommendedName>
        <fullName evidence="1">N-(5'-phosphoribosyl)anthranilate isomerase</fullName>
        <shortName evidence="1">PRAI</shortName>
        <ecNumber evidence="1">5.3.1.24</ecNumber>
    </recommendedName>
</protein>
<gene>
    <name evidence="1" type="primary">trpF</name>
    <name type="ordered locus">BC_1236</name>
</gene>
<organism>
    <name type="scientific">Bacillus cereus (strain ATCC 14579 / DSM 31 / CCUG 7414 / JCM 2152 / NBRC 15305 / NCIMB 9373 / NCTC 2599 / NRRL B-3711)</name>
    <dbReference type="NCBI Taxonomy" id="226900"/>
    <lineage>
        <taxon>Bacteria</taxon>
        <taxon>Bacillati</taxon>
        <taxon>Bacillota</taxon>
        <taxon>Bacilli</taxon>
        <taxon>Bacillales</taxon>
        <taxon>Bacillaceae</taxon>
        <taxon>Bacillus</taxon>
        <taxon>Bacillus cereus group</taxon>
    </lineage>
</organism>
<name>TRPF_BACCR</name>
<accession>Q81GG6</accession>